<gene>
    <name type="primary">Tmbim6</name>
    <name type="synonym">Bi1</name>
    <name type="synonym">Tegt</name>
</gene>
<protein>
    <recommendedName>
        <fullName>Bax inhibitor 1</fullName>
        <shortName>BI-1</shortName>
    </recommendedName>
    <alternativeName>
        <fullName>Testis-enhanced gene transcript protein</fullName>
    </alternativeName>
    <alternativeName>
        <fullName>Transmembrane BAX inhibitor motif-containing protein 6</fullName>
    </alternativeName>
</protein>
<feature type="chain" id="PRO_0000179082" description="Bax inhibitor 1">
    <location>
        <begin position="1"/>
        <end position="237"/>
    </location>
</feature>
<feature type="topological domain" description="Cytoplasmic" evidence="3">
    <location>
        <begin position="1"/>
        <end position="29"/>
    </location>
</feature>
<feature type="transmembrane region" description="Helical" evidence="3">
    <location>
        <begin position="30"/>
        <end position="50"/>
    </location>
</feature>
<feature type="topological domain" description="Lumenal" evidence="3">
    <location>
        <begin position="51"/>
        <end position="52"/>
    </location>
</feature>
<feature type="transmembrane region" description="Helical" evidence="3">
    <location>
        <begin position="53"/>
        <end position="73"/>
    </location>
</feature>
<feature type="topological domain" description="Cytoplasmic" evidence="3">
    <location>
        <begin position="74"/>
        <end position="86"/>
    </location>
</feature>
<feature type="transmembrane region" description="Helical" evidence="3">
    <location>
        <begin position="87"/>
        <end position="107"/>
    </location>
</feature>
<feature type="topological domain" description="Lumenal" evidence="3">
    <location>
        <begin position="108"/>
        <end position="112"/>
    </location>
</feature>
<feature type="transmembrane region" description="Helical" evidence="3">
    <location>
        <begin position="113"/>
        <end position="133"/>
    </location>
</feature>
<feature type="topological domain" description="Cytoplasmic" evidence="3">
    <location>
        <begin position="134"/>
        <end position="139"/>
    </location>
</feature>
<feature type="transmembrane region" description="Helical" evidence="3">
    <location>
        <begin position="140"/>
        <end position="160"/>
    </location>
</feature>
<feature type="topological domain" description="Lumenal" evidence="3">
    <location>
        <begin position="161"/>
        <end position="166"/>
    </location>
</feature>
<feature type="transmembrane region" description="Helical" evidence="3">
    <location>
        <begin position="167"/>
        <end position="187"/>
    </location>
</feature>
<feature type="topological domain" description="Cytoplasmic" evidence="3">
    <location>
        <begin position="188"/>
        <end position="206"/>
    </location>
</feature>
<feature type="intramembrane region" description="Helical" evidence="3">
    <location>
        <begin position="207"/>
        <end position="227"/>
    </location>
</feature>
<feature type="topological domain" description="Cytoplasmic" evidence="3">
    <location>
        <begin position="228"/>
        <end position="237"/>
    </location>
</feature>
<feature type="cross-link" description="Glycyl lysine isopeptide (Lys-Gly) (interchain with G-Cter in ubiquitin)" evidence="1">
    <location>
        <position position="7"/>
    </location>
</feature>
<feature type="sequence conflict" description="In Ref. 1; CAA53470/CAA53471." evidence="5" ref="1">
    <original>GF</original>
    <variation>V</variation>
    <location>
        <begin position="90"/>
        <end position="91"/>
    </location>
</feature>
<accession>P55062</accession>
<accession>Q64712</accession>
<accession>Q6PDV4</accession>
<sequence>MNIFDRKINFDALLKFSHITPSTQQHLKKVYASFALCMFVAAAGAYVHVVTRFIQAGLLSALGALALMICLMATPHSHETEQKRLGLLAGFAFLTGVGLGPALELCIAINPSILPTAFMGTAMIFTCFSLSALYARRRSYLFLGGILMSAMSLMFVSSLGNLFFGSIWLFQANLYMGLLVMCGFVLFDTQLIIEKAEHGDKDYIWHCIDLFLDFVTLFRKLMLILAFNEKDKKKEKK</sequence>
<reference key="1">
    <citation type="journal article" date="1994" name="Mamm. Genome">
        <title>A novel, conserved gene of the rat that is developmentally regulated in the testis.</title>
        <authorList>
            <person name="Walter L."/>
            <person name="Dirks B."/>
            <person name="Rothermel E."/>
            <person name="Heyens M."/>
            <person name="Szpirer C."/>
            <person name="Levan G."/>
            <person name="Guenther E."/>
        </authorList>
    </citation>
    <scope>NUCLEOTIDE SEQUENCE [MRNA]</scope>
    <scope>TISSUE SPECIFICITY</scope>
    <scope>DEVELOPMENTAL STAGE</scope>
    <source>
        <strain>Sprague-Dawley</strain>
        <tissue>Testis</tissue>
    </source>
</reference>
<reference key="2">
    <citation type="journal article" date="2004" name="Genome Res.">
        <title>The status, quality, and expansion of the NIH full-length cDNA project: the Mammalian Gene Collection (MGC).</title>
        <authorList>
            <consortium name="The MGC Project Team"/>
        </authorList>
    </citation>
    <scope>NUCLEOTIDE SEQUENCE [LARGE SCALE MRNA]</scope>
    <source>
        <tissue>Pituitary</tissue>
    </source>
</reference>
<dbReference type="EMBL" id="X75855">
    <property type="protein sequence ID" value="CAA53470.1"/>
    <property type="molecule type" value="mRNA"/>
</dbReference>
<dbReference type="EMBL" id="X75856">
    <property type="protein sequence ID" value="CAA53471.1"/>
    <property type="molecule type" value="mRNA"/>
</dbReference>
<dbReference type="EMBL" id="BC058478">
    <property type="protein sequence ID" value="AAH58478.1"/>
    <property type="molecule type" value="mRNA"/>
</dbReference>
<dbReference type="PIR" id="S42069">
    <property type="entry name" value="S42069"/>
</dbReference>
<dbReference type="RefSeq" id="NP_062254.2">
    <property type="nucleotide sequence ID" value="NM_019381.2"/>
</dbReference>
<dbReference type="RefSeq" id="XP_006257385.1">
    <property type="nucleotide sequence ID" value="XM_006257323.5"/>
</dbReference>
<dbReference type="RefSeq" id="XP_038934364.1">
    <property type="nucleotide sequence ID" value="XM_039078436.2"/>
</dbReference>
<dbReference type="RefSeq" id="XP_038934365.1">
    <property type="nucleotide sequence ID" value="XM_039078437.2"/>
</dbReference>
<dbReference type="SMR" id="P55062"/>
<dbReference type="FunCoup" id="P55062">
    <property type="interactions" value="1336"/>
</dbReference>
<dbReference type="STRING" id="10116.ENSRNOP00000069944"/>
<dbReference type="PhosphoSitePlus" id="P55062"/>
<dbReference type="PaxDb" id="10116-ENSRNOP00000048834"/>
<dbReference type="GeneID" id="24822"/>
<dbReference type="KEGG" id="rno:24822"/>
<dbReference type="UCSC" id="RGD:3842">
    <property type="organism name" value="rat"/>
</dbReference>
<dbReference type="AGR" id="RGD:3842"/>
<dbReference type="CTD" id="7009"/>
<dbReference type="RGD" id="3842">
    <property type="gene designation" value="Tmbim6"/>
</dbReference>
<dbReference type="VEuPathDB" id="HostDB:ENSRNOG00000055579"/>
<dbReference type="eggNOG" id="KOG1629">
    <property type="taxonomic scope" value="Eukaryota"/>
</dbReference>
<dbReference type="HOGENOM" id="CLU_061277_0_1_1"/>
<dbReference type="InParanoid" id="P55062"/>
<dbReference type="OrthoDB" id="72773at9989"/>
<dbReference type="PhylomeDB" id="P55062"/>
<dbReference type="PRO" id="PR:P55062"/>
<dbReference type="Proteomes" id="UP000002494">
    <property type="component" value="Chromosome 7"/>
</dbReference>
<dbReference type="Bgee" id="ENSRNOG00000055579">
    <property type="expression patterns" value="Expressed in adult mammalian kidney and 19 other cell types or tissues"/>
</dbReference>
<dbReference type="ExpressionAtlas" id="P55062">
    <property type="expression patterns" value="baseline and differential"/>
</dbReference>
<dbReference type="GO" id="GO:0005737">
    <property type="term" value="C:cytoplasm"/>
    <property type="evidence" value="ECO:0000266"/>
    <property type="project" value="RGD"/>
</dbReference>
<dbReference type="GO" id="GO:0005783">
    <property type="term" value="C:endoplasmic reticulum"/>
    <property type="evidence" value="ECO:0000266"/>
    <property type="project" value="RGD"/>
</dbReference>
<dbReference type="GO" id="GO:0005789">
    <property type="term" value="C:endoplasmic reticulum membrane"/>
    <property type="evidence" value="ECO:0000266"/>
    <property type="project" value="RGD"/>
</dbReference>
<dbReference type="GO" id="GO:0005262">
    <property type="term" value="F:calcium channel activity"/>
    <property type="evidence" value="ECO:0000318"/>
    <property type="project" value="GO_Central"/>
</dbReference>
<dbReference type="GO" id="GO:0060698">
    <property type="term" value="F:endoribonuclease inhibitor activity"/>
    <property type="evidence" value="ECO:0000266"/>
    <property type="project" value="RGD"/>
</dbReference>
<dbReference type="GO" id="GO:0019899">
    <property type="term" value="F:enzyme binding"/>
    <property type="evidence" value="ECO:0000266"/>
    <property type="project" value="RGD"/>
</dbReference>
<dbReference type="GO" id="GO:0031625">
    <property type="term" value="F:ubiquitin protein ligase binding"/>
    <property type="evidence" value="ECO:0000266"/>
    <property type="project" value="RGD"/>
</dbReference>
<dbReference type="GO" id="GO:0006914">
    <property type="term" value="P:autophagy"/>
    <property type="evidence" value="ECO:0007669"/>
    <property type="project" value="UniProtKB-KW"/>
</dbReference>
<dbReference type="GO" id="GO:0034620">
    <property type="term" value="P:cellular response to unfolded protein"/>
    <property type="evidence" value="ECO:0000266"/>
    <property type="project" value="RGD"/>
</dbReference>
<dbReference type="GO" id="GO:0032469">
    <property type="term" value="P:endoplasmic reticulum calcium ion homeostasis"/>
    <property type="evidence" value="ECO:0000266"/>
    <property type="project" value="RGD"/>
</dbReference>
<dbReference type="GO" id="GO:0070059">
    <property type="term" value="P:intrinsic apoptotic signaling pathway in response to endoplasmic reticulum stress"/>
    <property type="evidence" value="ECO:0000266"/>
    <property type="project" value="RGD"/>
</dbReference>
<dbReference type="GO" id="GO:0030324">
    <property type="term" value="P:lung development"/>
    <property type="evidence" value="ECO:0000270"/>
    <property type="project" value="RGD"/>
</dbReference>
<dbReference type="GO" id="GO:0043066">
    <property type="term" value="P:negative regulation of apoptotic process"/>
    <property type="evidence" value="ECO:0000266"/>
    <property type="project" value="RGD"/>
</dbReference>
<dbReference type="GO" id="GO:2001234">
    <property type="term" value="P:negative regulation of apoptotic signaling pathway"/>
    <property type="evidence" value="ECO:0000266"/>
    <property type="project" value="RGD"/>
</dbReference>
<dbReference type="GO" id="GO:0010523">
    <property type="term" value="P:negative regulation of calcium ion transport into cytosol"/>
    <property type="evidence" value="ECO:0000266"/>
    <property type="project" value="RGD"/>
</dbReference>
<dbReference type="GO" id="GO:1902236">
    <property type="term" value="P:negative regulation of endoplasmic reticulum stress-induced intrinsic apoptotic signaling pathway"/>
    <property type="evidence" value="ECO:0000266"/>
    <property type="project" value="RGD"/>
</dbReference>
<dbReference type="GO" id="GO:1903298">
    <property type="term" value="P:negative regulation of hypoxia-induced intrinsic apoptotic signaling pathway"/>
    <property type="evidence" value="ECO:0000266"/>
    <property type="project" value="RGD"/>
</dbReference>
<dbReference type="GO" id="GO:0002638">
    <property type="term" value="P:negative regulation of immunoglobulin production"/>
    <property type="evidence" value="ECO:0000266"/>
    <property type="project" value="RGD"/>
</dbReference>
<dbReference type="GO" id="GO:1903895">
    <property type="term" value="P:negative regulation of IRE1-mediated unfolded protein response"/>
    <property type="evidence" value="ECO:0000266"/>
    <property type="project" value="RGD"/>
</dbReference>
<dbReference type="GO" id="GO:0033119">
    <property type="term" value="P:negative regulation of RNA splicing"/>
    <property type="evidence" value="ECO:0000266"/>
    <property type="project" value="RGD"/>
</dbReference>
<dbReference type="GO" id="GO:0036483">
    <property type="term" value="P:neuron intrinsic apoptotic signaling pathway in response to endoplasmic reticulum stress"/>
    <property type="evidence" value="ECO:0000266"/>
    <property type="project" value="RGD"/>
</dbReference>
<dbReference type="GO" id="GO:0034976">
    <property type="term" value="P:response to endoplasmic reticulum stress"/>
    <property type="evidence" value="ECO:0000266"/>
    <property type="project" value="RGD"/>
</dbReference>
<dbReference type="GO" id="GO:1902065">
    <property type="term" value="P:response to L-glutamate"/>
    <property type="evidence" value="ECO:0000266"/>
    <property type="project" value="RGD"/>
</dbReference>
<dbReference type="GO" id="GO:0007283">
    <property type="term" value="P:spermatogenesis"/>
    <property type="evidence" value="ECO:0000270"/>
    <property type="project" value="RGD"/>
</dbReference>
<dbReference type="CDD" id="cd10430">
    <property type="entry name" value="BI-1"/>
    <property type="match status" value="1"/>
</dbReference>
<dbReference type="InterPro" id="IPR006213">
    <property type="entry name" value="Bax_inhbtr1_CS"/>
</dbReference>
<dbReference type="InterPro" id="IPR006214">
    <property type="entry name" value="Bax_inhibitor_1-related"/>
</dbReference>
<dbReference type="PANTHER" id="PTHR23291:SF32">
    <property type="entry name" value="BAX INHIBITOR 1"/>
    <property type="match status" value="1"/>
</dbReference>
<dbReference type="PANTHER" id="PTHR23291">
    <property type="entry name" value="BAX INHIBITOR-RELATED"/>
    <property type="match status" value="1"/>
</dbReference>
<dbReference type="Pfam" id="PF01027">
    <property type="entry name" value="Bax1-I"/>
    <property type="match status" value="1"/>
</dbReference>
<dbReference type="PROSITE" id="PS01243">
    <property type="entry name" value="BI1"/>
    <property type="match status" value="1"/>
</dbReference>
<keyword id="KW-0053">Apoptosis</keyword>
<keyword id="KW-0072">Autophagy</keyword>
<keyword id="KW-0106">Calcium</keyword>
<keyword id="KW-0256">Endoplasmic reticulum</keyword>
<keyword id="KW-1017">Isopeptide bond</keyword>
<keyword id="KW-0472">Membrane</keyword>
<keyword id="KW-1185">Reference proteome</keyword>
<keyword id="KW-0812">Transmembrane</keyword>
<keyword id="KW-1133">Transmembrane helix</keyword>
<keyword id="KW-0832">Ubl conjugation</keyword>
<keyword id="KW-0834">Unfolded protein response</keyword>
<organism>
    <name type="scientific">Rattus norvegicus</name>
    <name type="common">Rat</name>
    <dbReference type="NCBI Taxonomy" id="10116"/>
    <lineage>
        <taxon>Eukaryota</taxon>
        <taxon>Metazoa</taxon>
        <taxon>Chordata</taxon>
        <taxon>Craniata</taxon>
        <taxon>Vertebrata</taxon>
        <taxon>Euteleostomi</taxon>
        <taxon>Mammalia</taxon>
        <taxon>Eutheria</taxon>
        <taxon>Euarchontoglires</taxon>
        <taxon>Glires</taxon>
        <taxon>Rodentia</taxon>
        <taxon>Myomorpha</taxon>
        <taxon>Muroidea</taxon>
        <taxon>Muridae</taxon>
        <taxon>Murinae</taxon>
        <taxon>Rattus</taxon>
    </lineage>
</organism>
<comment type="function">
    <text evidence="1 2">Endoplasmic reticulum (ER)-resident protein that confers cellular protection as an anti-apoptotic protein by limiting multiple stress-inducing pathways surrounding the endoplasmic reticulum and mitochondria. Inhibits the activities of the key sensor for the endoplasmic reticulum unfolded protein response IRE1alpha/ERN1 both directly and by blocking BAX/BAK binding. Modulates ER calcium homeostasis by acting as a calcium-leak channel (By similarity). Negatively regulates autophagy and autophagosome formation, especially during periods of nutrient deprivation, and reduces cell survival during starvation (By similarity).</text>
</comment>
<comment type="subunit">
    <text evidence="1">Interacts with BCL2 and BCL2L1. Interacts with ERN1.</text>
</comment>
<comment type="subcellular location">
    <subcellularLocation>
        <location evidence="1">Endoplasmic reticulum membrane</location>
        <topology evidence="1">Multi-pass membrane protein</topology>
    </subcellularLocation>
</comment>
<comment type="tissue specificity">
    <text evidence="4">Highly abundant in adult testis.</text>
</comment>
<comment type="developmental stage">
    <text evidence="4">During spermatogenesis, it is mainly expressed postmeiotically.</text>
</comment>
<comment type="domain">
    <text evidence="1">The intra-membrane loop at the C-terminus acts as a calcium pore, mediating calcium leak from the ER into the cytosol.</text>
</comment>
<comment type="PTM">
    <text evidence="1">Ubiquitinated by BFAR, leading to proteasomal degradation.</text>
</comment>
<comment type="similarity">
    <text evidence="5">Belongs to the BI1 family.</text>
</comment>
<proteinExistence type="evidence at transcript level"/>
<name>BI1_RAT</name>
<evidence type="ECO:0000250" key="1">
    <source>
        <dbReference type="UniProtKB" id="P55061"/>
    </source>
</evidence>
<evidence type="ECO:0000250" key="2">
    <source>
        <dbReference type="UniProtKB" id="Q9D2C7"/>
    </source>
</evidence>
<evidence type="ECO:0000255" key="3"/>
<evidence type="ECO:0000269" key="4">
    <source>
    </source>
</evidence>
<evidence type="ECO:0000305" key="5"/>